<evidence type="ECO:0000255" key="1">
    <source>
        <dbReference type="HAMAP-Rule" id="MF_01347"/>
    </source>
</evidence>
<proteinExistence type="inferred from homology"/>
<protein>
    <recommendedName>
        <fullName evidence="1">ATP synthase subunit beta, chloroplastic</fullName>
        <ecNumber evidence="1">7.1.2.2</ecNumber>
    </recommendedName>
    <alternativeName>
        <fullName evidence="1">ATP synthase F1 sector subunit beta</fullName>
    </alternativeName>
    <alternativeName>
        <fullName evidence="1">F-ATPase subunit beta</fullName>
    </alternativeName>
</protein>
<name>ATPB_HYANO</name>
<comment type="function">
    <text evidence="1">Produces ATP from ADP in the presence of a proton gradient across the membrane. The catalytic sites are hosted primarily by the beta subunits.</text>
</comment>
<comment type="catalytic activity">
    <reaction evidence="1">
        <text>ATP + H2O + 4 H(+)(in) = ADP + phosphate + 5 H(+)(out)</text>
        <dbReference type="Rhea" id="RHEA:57720"/>
        <dbReference type="ChEBI" id="CHEBI:15377"/>
        <dbReference type="ChEBI" id="CHEBI:15378"/>
        <dbReference type="ChEBI" id="CHEBI:30616"/>
        <dbReference type="ChEBI" id="CHEBI:43474"/>
        <dbReference type="ChEBI" id="CHEBI:456216"/>
        <dbReference type="EC" id="7.1.2.2"/>
    </reaction>
</comment>
<comment type="subunit">
    <text evidence="1">F-type ATPases have 2 components, CF(1) - the catalytic core - and CF(0) - the membrane proton channel. CF(1) has five subunits: alpha(3), beta(3), gamma(1), delta(1), epsilon(1). CF(0) has four main subunits: a(1), b(1), b'(1) and c(9-12).</text>
</comment>
<comment type="subcellular location">
    <subcellularLocation>
        <location evidence="1">Plastid</location>
        <location evidence="1">Chloroplast thylakoid membrane</location>
        <topology evidence="1">Peripheral membrane protein</topology>
    </subcellularLocation>
</comment>
<comment type="similarity">
    <text evidence="1">Belongs to the ATPase alpha/beta chains family.</text>
</comment>
<keyword id="KW-0066">ATP synthesis</keyword>
<keyword id="KW-0067">ATP-binding</keyword>
<keyword id="KW-0139">CF(1)</keyword>
<keyword id="KW-0150">Chloroplast</keyword>
<keyword id="KW-0375">Hydrogen ion transport</keyword>
<keyword id="KW-0406">Ion transport</keyword>
<keyword id="KW-0472">Membrane</keyword>
<keyword id="KW-0547">Nucleotide-binding</keyword>
<keyword id="KW-0934">Plastid</keyword>
<keyword id="KW-0793">Thylakoid</keyword>
<keyword id="KW-1278">Translocase</keyword>
<keyword id="KW-0813">Transport</keyword>
<dbReference type="EC" id="7.1.2.2" evidence="1"/>
<dbReference type="EMBL" id="AJ508217">
    <property type="protein sequence ID" value="CAD48414.1"/>
    <property type="molecule type" value="Genomic_DNA"/>
</dbReference>
<dbReference type="SMR" id="Q85V26"/>
<dbReference type="GO" id="GO:0009535">
    <property type="term" value="C:chloroplast thylakoid membrane"/>
    <property type="evidence" value="ECO:0007669"/>
    <property type="project" value="UniProtKB-SubCell"/>
</dbReference>
<dbReference type="GO" id="GO:0005739">
    <property type="term" value="C:mitochondrion"/>
    <property type="evidence" value="ECO:0007669"/>
    <property type="project" value="GOC"/>
</dbReference>
<dbReference type="GO" id="GO:0045259">
    <property type="term" value="C:proton-transporting ATP synthase complex"/>
    <property type="evidence" value="ECO:0007669"/>
    <property type="project" value="UniProtKB-KW"/>
</dbReference>
<dbReference type="GO" id="GO:0005524">
    <property type="term" value="F:ATP binding"/>
    <property type="evidence" value="ECO:0007669"/>
    <property type="project" value="UniProtKB-UniRule"/>
</dbReference>
<dbReference type="GO" id="GO:0016887">
    <property type="term" value="F:ATP hydrolysis activity"/>
    <property type="evidence" value="ECO:0007669"/>
    <property type="project" value="InterPro"/>
</dbReference>
<dbReference type="GO" id="GO:0046933">
    <property type="term" value="F:proton-transporting ATP synthase activity, rotational mechanism"/>
    <property type="evidence" value="ECO:0007669"/>
    <property type="project" value="UniProtKB-UniRule"/>
</dbReference>
<dbReference type="GO" id="GO:0042776">
    <property type="term" value="P:proton motive force-driven mitochondrial ATP synthesis"/>
    <property type="evidence" value="ECO:0007669"/>
    <property type="project" value="TreeGrafter"/>
</dbReference>
<dbReference type="CDD" id="cd18110">
    <property type="entry name" value="ATP-synt_F1_beta_C"/>
    <property type="match status" value="1"/>
</dbReference>
<dbReference type="CDD" id="cd18115">
    <property type="entry name" value="ATP-synt_F1_beta_N"/>
    <property type="match status" value="1"/>
</dbReference>
<dbReference type="CDD" id="cd01133">
    <property type="entry name" value="F1-ATPase_beta_CD"/>
    <property type="match status" value="1"/>
</dbReference>
<dbReference type="FunFam" id="1.10.1140.10:FF:000001">
    <property type="entry name" value="ATP synthase subunit beta"/>
    <property type="match status" value="1"/>
</dbReference>
<dbReference type="FunFam" id="3.40.50.300:FF:000026">
    <property type="entry name" value="ATP synthase subunit beta"/>
    <property type="match status" value="1"/>
</dbReference>
<dbReference type="FunFam" id="2.40.10.170:FF:000002">
    <property type="entry name" value="ATP synthase subunit beta, chloroplastic"/>
    <property type="match status" value="1"/>
</dbReference>
<dbReference type="Gene3D" id="2.40.10.170">
    <property type="match status" value="1"/>
</dbReference>
<dbReference type="Gene3D" id="1.10.1140.10">
    <property type="entry name" value="Bovine Mitochondrial F1-atpase, Atp Synthase Beta Chain, Chain D, domain 3"/>
    <property type="match status" value="1"/>
</dbReference>
<dbReference type="Gene3D" id="3.40.50.300">
    <property type="entry name" value="P-loop containing nucleotide triphosphate hydrolases"/>
    <property type="match status" value="1"/>
</dbReference>
<dbReference type="HAMAP" id="MF_01347">
    <property type="entry name" value="ATP_synth_beta_bact"/>
    <property type="match status" value="1"/>
</dbReference>
<dbReference type="InterPro" id="IPR003593">
    <property type="entry name" value="AAA+_ATPase"/>
</dbReference>
<dbReference type="InterPro" id="IPR055190">
    <property type="entry name" value="ATP-synt_VA_C"/>
</dbReference>
<dbReference type="InterPro" id="IPR005722">
    <property type="entry name" value="ATP_synth_F1_bsu"/>
</dbReference>
<dbReference type="InterPro" id="IPR020003">
    <property type="entry name" value="ATPase_a/bsu_AS"/>
</dbReference>
<dbReference type="InterPro" id="IPR050053">
    <property type="entry name" value="ATPase_alpha/beta_chains"/>
</dbReference>
<dbReference type="InterPro" id="IPR004100">
    <property type="entry name" value="ATPase_F1/V1/A1_a/bsu_N"/>
</dbReference>
<dbReference type="InterPro" id="IPR036121">
    <property type="entry name" value="ATPase_F1/V1/A1_a/bsu_N_sf"/>
</dbReference>
<dbReference type="InterPro" id="IPR000194">
    <property type="entry name" value="ATPase_F1/V1/A1_a/bsu_nucl-bd"/>
</dbReference>
<dbReference type="InterPro" id="IPR024034">
    <property type="entry name" value="ATPase_F1/V1_b/a_C"/>
</dbReference>
<dbReference type="InterPro" id="IPR027417">
    <property type="entry name" value="P-loop_NTPase"/>
</dbReference>
<dbReference type="NCBIfam" id="TIGR01039">
    <property type="entry name" value="atpD"/>
    <property type="match status" value="1"/>
</dbReference>
<dbReference type="PANTHER" id="PTHR15184">
    <property type="entry name" value="ATP SYNTHASE"/>
    <property type="match status" value="1"/>
</dbReference>
<dbReference type="PANTHER" id="PTHR15184:SF71">
    <property type="entry name" value="ATP SYNTHASE SUBUNIT BETA, MITOCHONDRIAL"/>
    <property type="match status" value="1"/>
</dbReference>
<dbReference type="Pfam" id="PF00006">
    <property type="entry name" value="ATP-synt_ab"/>
    <property type="match status" value="1"/>
</dbReference>
<dbReference type="Pfam" id="PF02874">
    <property type="entry name" value="ATP-synt_ab_N"/>
    <property type="match status" value="1"/>
</dbReference>
<dbReference type="Pfam" id="PF22919">
    <property type="entry name" value="ATP-synt_VA_C"/>
    <property type="match status" value="1"/>
</dbReference>
<dbReference type="SMART" id="SM00382">
    <property type="entry name" value="AAA"/>
    <property type="match status" value="1"/>
</dbReference>
<dbReference type="SUPFAM" id="SSF47917">
    <property type="entry name" value="C-terminal domain of alpha and beta subunits of F1 ATP synthase"/>
    <property type="match status" value="1"/>
</dbReference>
<dbReference type="SUPFAM" id="SSF50615">
    <property type="entry name" value="N-terminal domain of alpha and beta subunits of F1 ATP synthase"/>
    <property type="match status" value="1"/>
</dbReference>
<dbReference type="SUPFAM" id="SSF52540">
    <property type="entry name" value="P-loop containing nucleoside triphosphate hydrolases"/>
    <property type="match status" value="1"/>
</dbReference>
<dbReference type="PROSITE" id="PS00152">
    <property type="entry name" value="ATPASE_ALPHA_BETA"/>
    <property type="match status" value="1"/>
</dbReference>
<sequence>MRINPTTSGSAVSTLEEKNLGRIAQIIGPVLDVVFPPGKMPNIYNALVVKGRDTVGQQINVICEVQQLLGNNRVRAVAMSATDGLTRGMEVIDTGAALSVPVGGATLGRIFNVLGEPIDNLGPVDTRTTSPIHRSAPAFIQLDTKLSIFETGIKVVDLLAPYRRGGKIGLFGGAGVGKTVLIMELINNIAKAHGGVSVFGGVGERTREGNDLYMEMKESGVINEKNIAESKVALVYGQMNEPPGARMRVGLTALTMAEYFRDVNEQDVLLFIDNIFRFVQAGSEVSALLGRMPSAVGYQPTLSTEMGSLQERITSTKEGSITSIQAVYVPADDLTDPAPATTFAHLDATTVLSRGLSAKGIYPAVDPLDSTSTMLQPRIVGEEHYETAQRVKQTLQRYKELQDIIAILGLDELSEEDRLTVARARKIERFLSQPFFVAEVFTGSPGKYVGLAETIRGFQLILSGELDSLPEQAFYLVGNIDEATAKAMNLEGEKK</sequence>
<feature type="chain" id="PRO_0000254482" description="ATP synthase subunit beta, chloroplastic">
    <location>
        <begin position="1"/>
        <end position="495"/>
    </location>
</feature>
<feature type="binding site" evidence="1">
    <location>
        <begin position="172"/>
        <end position="179"/>
    </location>
    <ligand>
        <name>ATP</name>
        <dbReference type="ChEBI" id="CHEBI:30616"/>
    </ligand>
</feature>
<accession>Q85V26</accession>
<gene>
    <name evidence="1" type="primary">atpB</name>
</gene>
<organism>
    <name type="scientific">Hyacinthoides non-scripta</name>
    <name type="common">English bluebell</name>
    <name type="synonym">Hyacinthus non-scriptus</name>
    <dbReference type="NCBI Taxonomy" id="81762"/>
    <lineage>
        <taxon>Eukaryota</taxon>
        <taxon>Viridiplantae</taxon>
        <taxon>Streptophyta</taxon>
        <taxon>Embryophyta</taxon>
        <taxon>Tracheophyta</taxon>
        <taxon>Spermatophyta</taxon>
        <taxon>Magnoliopsida</taxon>
        <taxon>Liliopsida</taxon>
        <taxon>Asparagales</taxon>
        <taxon>Hyacinthaceae</taxon>
        <taxon>Hyacinthoideae</taxon>
        <taxon>Hyacintheae</taxon>
        <taxon>Hyacinthoides</taxon>
    </lineage>
</organism>
<geneLocation type="chloroplast"/>
<reference key="1">
    <citation type="journal article" date="2003" name="J. Plant Res.">
        <title>Phylogenetic relationships among genera of Massonieae (Hyacinthaceae) inferred from plastid DNA and seed morphology.</title>
        <authorList>
            <person name="Pfosser M.F."/>
            <person name="Wetschnig W."/>
            <person name="Ungar S."/>
            <person name="Prenner G."/>
        </authorList>
    </citation>
    <scope>NUCLEOTIDE SEQUENCE [GENOMIC DNA]</scope>
</reference>